<keyword id="KW-1185">Reference proteome</keyword>
<keyword id="KW-0687">Ribonucleoprotein</keyword>
<keyword id="KW-0689">Ribosomal protein</keyword>
<proteinExistence type="inferred from homology"/>
<organism>
    <name type="scientific">Gemmatimonas aurantiaca (strain DSM 14586 / JCM 11422 / NBRC 100505 / T-27)</name>
    <dbReference type="NCBI Taxonomy" id="379066"/>
    <lineage>
        <taxon>Bacteria</taxon>
        <taxon>Pseudomonadati</taxon>
        <taxon>Gemmatimonadota</taxon>
        <taxon>Gemmatimonadia</taxon>
        <taxon>Gemmatimonadales</taxon>
        <taxon>Gemmatimonadaceae</taxon>
        <taxon>Gemmatimonas</taxon>
    </lineage>
</organism>
<dbReference type="EMBL" id="AP009153">
    <property type="protein sequence ID" value="BAH38936.1"/>
    <property type="molecule type" value="Genomic_DNA"/>
</dbReference>
<dbReference type="RefSeq" id="WP_012683383.1">
    <property type="nucleotide sequence ID" value="NC_012489.1"/>
</dbReference>
<dbReference type="SMR" id="C1A4B1"/>
<dbReference type="STRING" id="379066.GAU_1894"/>
<dbReference type="KEGG" id="gau:GAU_1894"/>
<dbReference type="eggNOG" id="COG0828">
    <property type="taxonomic scope" value="Bacteria"/>
</dbReference>
<dbReference type="HOGENOM" id="CLU_159258_1_2_0"/>
<dbReference type="OrthoDB" id="9799244at2"/>
<dbReference type="Proteomes" id="UP000002209">
    <property type="component" value="Chromosome"/>
</dbReference>
<dbReference type="GO" id="GO:1990904">
    <property type="term" value="C:ribonucleoprotein complex"/>
    <property type="evidence" value="ECO:0007669"/>
    <property type="project" value="UniProtKB-KW"/>
</dbReference>
<dbReference type="GO" id="GO:0005840">
    <property type="term" value="C:ribosome"/>
    <property type="evidence" value="ECO:0007669"/>
    <property type="project" value="UniProtKB-KW"/>
</dbReference>
<dbReference type="GO" id="GO:0003735">
    <property type="term" value="F:structural constituent of ribosome"/>
    <property type="evidence" value="ECO:0007669"/>
    <property type="project" value="InterPro"/>
</dbReference>
<dbReference type="GO" id="GO:0006412">
    <property type="term" value="P:translation"/>
    <property type="evidence" value="ECO:0007669"/>
    <property type="project" value="UniProtKB-UniRule"/>
</dbReference>
<dbReference type="Gene3D" id="1.20.5.1150">
    <property type="entry name" value="Ribosomal protein S8"/>
    <property type="match status" value="1"/>
</dbReference>
<dbReference type="HAMAP" id="MF_00358">
    <property type="entry name" value="Ribosomal_bS21"/>
    <property type="match status" value="1"/>
</dbReference>
<dbReference type="InterPro" id="IPR001911">
    <property type="entry name" value="Ribosomal_bS21"/>
</dbReference>
<dbReference type="InterPro" id="IPR018278">
    <property type="entry name" value="Ribosomal_bS21_CS"/>
</dbReference>
<dbReference type="InterPro" id="IPR038380">
    <property type="entry name" value="Ribosomal_bS21_sf"/>
</dbReference>
<dbReference type="NCBIfam" id="TIGR00030">
    <property type="entry name" value="S21p"/>
    <property type="match status" value="1"/>
</dbReference>
<dbReference type="PANTHER" id="PTHR21109">
    <property type="entry name" value="MITOCHONDRIAL 28S RIBOSOMAL PROTEIN S21"/>
    <property type="match status" value="1"/>
</dbReference>
<dbReference type="PANTHER" id="PTHR21109:SF22">
    <property type="entry name" value="SMALL RIBOSOMAL SUBUNIT PROTEIN BS21"/>
    <property type="match status" value="1"/>
</dbReference>
<dbReference type="Pfam" id="PF01165">
    <property type="entry name" value="Ribosomal_S21"/>
    <property type="match status" value="1"/>
</dbReference>
<dbReference type="PRINTS" id="PR00976">
    <property type="entry name" value="RIBOSOMALS21"/>
</dbReference>
<dbReference type="PROSITE" id="PS01181">
    <property type="entry name" value="RIBOSOMAL_S21"/>
    <property type="match status" value="1"/>
</dbReference>
<comment type="similarity">
    <text evidence="1">Belongs to the bacterial ribosomal protein bS21 family.</text>
</comment>
<gene>
    <name evidence="1" type="primary">rpsU</name>
    <name type="ordered locus">GAU_1894</name>
</gene>
<feature type="chain" id="PRO_1000205369" description="Small ribosomal subunit protein bS21">
    <location>
        <begin position="1"/>
        <end position="62"/>
    </location>
</feature>
<feature type="region of interest" description="Disordered" evidence="2">
    <location>
        <begin position="38"/>
        <end position="62"/>
    </location>
</feature>
<reference key="1">
    <citation type="submission" date="2006-03" db="EMBL/GenBank/DDBJ databases">
        <title>Complete genome sequence of Gemmatimonas aurantiaca T-27 that represents a novel phylum Gemmatimonadetes.</title>
        <authorList>
            <person name="Takasaki K."/>
            <person name="Ichikawa N."/>
            <person name="Miura H."/>
            <person name="Matsushita S."/>
            <person name="Watanabe Y."/>
            <person name="Oguchi A."/>
            <person name="Ankai A."/>
            <person name="Yashiro I."/>
            <person name="Takahashi M."/>
            <person name="Terui Y."/>
            <person name="Fukui S."/>
            <person name="Yokoyama H."/>
            <person name="Tanikawa S."/>
            <person name="Hanada S."/>
            <person name="Kamagata Y."/>
            <person name="Fujita N."/>
        </authorList>
    </citation>
    <scope>NUCLEOTIDE SEQUENCE [LARGE SCALE GENOMIC DNA]</scope>
    <source>
        <strain>DSM 14586 / JCM 11422 / NBRC 100505 / T-27</strain>
    </source>
</reference>
<name>RS21_GEMAT</name>
<protein>
    <recommendedName>
        <fullName evidence="1">Small ribosomal subunit protein bS21</fullName>
    </recommendedName>
    <alternativeName>
        <fullName evidence="3">30S ribosomal protein S21</fullName>
    </alternativeName>
</protein>
<accession>C1A4B1</accession>
<sequence>MSEVIIHEDENFERALKRFKKKCEKAGILSDLRKHRHYEKPSERRKRKMNAAVRKNRRTRHG</sequence>
<evidence type="ECO:0000255" key="1">
    <source>
        <dbReference type="HAMAP-Rule" id="MF_00358"/>
    </source>
</evidence>
<evidence type="ECO:0000256" key="2">
    <source>
        <dbReference type="SAM" id="MobiDB-lite"/>
    </source>
</evidence>
<evidence type="ECO:0000305" key="3"/>